<sequence length="255" mass="27749">MNLTEYSHILFLSLCTLNFCLYSINSDDNGGWERGHATFYGGADASGTMGGACGYGNLHSQGYGLQTAALSTALFNSGQKCGACFELQCEDDPEWCIPGSIIVSATNFCPPNFALANDNGGWCNPPLKHFDLAEPAFLQIAQYRAGIVPVAFRRVPCEKGGGIRFTINGNPYFDLVLITNVGGAGDIRAVSLKGSKTDQWQSMSRNWGQNWQSNTYLRGQSLSFQVTDSDGRTVVSYDVVPHDWQFGQTFEGGQF</sequence>
<accession>Q38866</accession>
<accession>Q9FLC5</accession>
<comment type="function">
    <text evidence="1">Causes loosening and extension of plant cell walls by disrupting non-covalent bonding between cellulose microfibrils and matrix glucans. No enzymatic activity has been found (By similarity).</text>
</comment>
<comment type="subcellular location">
    <subcellularLocation>
        <location>Secreted</location>
        <location>Cell wall</location>
    </subcellularLocation>
    <subcellularLocation>
        <location>Membrane</location>
        <topology>Peripheral membrane protein</topology>
    </subcellularLocation>
</comment>
<comment type="similarity">
    <text evidence="5">Belongs to the expansin family. Expansin A subfamily.</text>
</comment>
<comment type="online information" name="EXPANSIN homepage">
    <link uri="https://www.dept.psu.edu/biology/groups/expansins/index.htm"/>
</comment>
<dbReference type="EMBL" id="U30481">
    <property type="protein sequence ID" value="AAB38073.1"/>
    <property type="molecule type" value="mRNA"/>
</dbReference>
<dbReference type="EMBL" id="AB010692">
    <property type="protein sequence ID" value="BAB09972.1"/>
    <property type="molecule type" value="Genomic_DNA"/>
</dbReference>
<dbReference type="EMBL" id="CP002688">
    <property type="protein sequence ID" value="AED90852.1"/>
    <property type="molecule type" value="Genomic_DNA"/>
</dbReference>
<dbReference type="PIR" id="T50656">
    <property type="entry name" value="T50656"/>
</dbReference>
<dbReference type="RefSeq" id="NP_196148.1">
    <property type="nucleotide sequence ID" value="NM_120611.3"/>
</dbReference>
<dbReference type="SMR" id="Q38866"/>
<dbReference type="STRING" id="3702.Q38866"/>
<dbReference type="PaxDb" id="3702-AT5G05290.1"/>
<dbReference type="ProteomicsDB" id="222305"/>
<dbReference type="EnsemblPlants" id="AT5G05290.1">
    <property type="protein sequence ID" value="AT5G05290.1"/>
    <property type="gene ID" value="AT5G05290"/>
</dbReference>
<dbReference type="GeneID" id="830411"/>
<dbReference type="Gramene" id="AT5G05290.1">
    <property type="protein sequence ID" value="AT5G05290.1"/>
    <property type="gene ID" value="AT5G05290"/>
</dbReference>
<dbReference type="KEGG" id="ath:AT5G05290"/>
<dbReference type="Araport" id="AT5G05290"/>
<dbReference type="TAIR" id="AT5G05290">
    <property type="gene designation" value="EXPA2"/>
</dbReference>
<dbReference type="eggNOG" id="ENOG502QPUJ">
    <property type="taxonomic scope" value="Eukaryota"/>
</dbReference>
<dbReference type="HOGENOM" id="CLU_027462_0_1_1"/>
<dbReference type="InParanoid" id="Q38866"/>
<dbReference type="OMA" id="GEWQTAH"/>
<dbReference type="OrthoDB" id="5823761at2759"/>
<dbReference type="PhylomeDB" id="Q38866"/>
<dbReference type="PRO" id="PR:Q38866"/>
<dbReference type="Proteomes" id="UP000006548">
    <property type="component" value="Chromosome 5"/>
</dbReference>
<dbReference type="ExpressionAtlas" id="Q38866">
    <property type="expression patterns" value="baseline and differential"/>
</dbReference>
<dbReference type="GO" id="GO:0005576">
    <property type="term" value="C:extracellular region"/>
    <property type="evidence" value="ECO:0007669"/>
    <property type="project" value="UniProtKB-KW"/>
</dbReference>
<dbReference type="GO" id="GO:0016020">
    <property type="term" value="C:membrane"/>
    <property type="evidence" value="ECO:0007669"/>
    <property type="project" value="UniProtKB-SubCell"/>
</dbReference>
<dbReference type="GO" id="GO:0009653">
    <property type="term" value="P:anatomical structure morphogenesis"/>
    <property type="evidence" value="ECO:0007669"/>
    <property type="project" value="UniProtKB-ARBA"/>
</dbReference>
<dbReference type="GO" id="GO:0009828">
    <property type="term" value="P:plant-type cell wall loosening"/>
    <property type="evidence" value="ECO:0000250"/>
    <property type="project" value="UniProtKB"/>
</dbReference>
<dbReference type="CDD" id="cd22274">
    <property type="entry name" value="DPBB_EXPA_N"/>
    <property type="match status" value="1"/>
</dbReference>
<dbReference type="FunFam" id="2.40.40.10:FF:000001">
    <property type="entry name" value="Expansin"/>
    <property type="match status" value="1"/>
</dbReference>
<dbReference type="FunFam" id="2.60.40.760:FF:000001">
    <property type="entry name" value="Expansin"/>
    <property type="match status" value="1"/>
</dbReference>
<dbReference type="Gene3D" id="2.60.40.760">
    <property type="entry name" value="Expansin, cellulose-binding-like domain"/>
    <property type="match status" value="1"/>
</dbReference>
<dbReference type="Gene3D" id="2.40.40.10">
    <property type="entry name" value="RlpA-like domain"/>
    <property type="match status" value="1"/>
</dbReference>
<dbReference type="InterPro" id="IPR007118">
    <property type="entry name" value="Expan_Lol_pI"/>
</dbReference>
<dbReference type="InterPro" id="IPR002963">
    <property type="entry name" value="Expansin"/>
</dbReference>
<dbReference type="InterPro" id="IPR007112">
    <property type="entry name" value="Expansin/allergen_DPBB_dom"/>
</dbReference>
<dbReference type="InterPro" id="IPR007117">
    <property type="entry name" value="Expansin_CBD"/>
</dbReference>
<dbReference type="InterPro" id="IPR036749">
    <property type="entry name" value="Expansin_CBD_sf"/>
</dbReference>
<dbReference type="InterPro" id="IPR009009">
    <property type="entry name" value="RlpA-like_DPBB"/>
</dbReference>
<dbReference type="InterPro" id="IPR036908">
    <property type="entry name" value="RlpA-like_sf"/>
</dbReference>
<dbReference type="PANTHER" id="PTHR31867">
    <property type="entry name" value="EXPANSIN-A15"/>
    <property type="match status" value="1"/>
</dbReference>
<dbReference type="Pfam" id="PF03330">
    <property type="entry name" value="DPBB_1"/>
    <property type="match status" value="1"/>
</dbReference>
<dbReference type="Pfam" id="PF01357">
    <property type="entry name" value="Expansin_C"/>
    <property type="match status" value="1"/>
</dbReference>
<dbReference type="PRINTS" id="PR01226">
    <property type="entry name" value="EXPANSIN"/>
</dbReference>
<dbReference type="PRINTS" id="PR01225">
    <property type="entry name" value="EXPANSNFAMLY"/>
</dbReference>
<dbReference type="SMART" id="SM00837">
    <property type="entry name" value="DPBB_1"/>
    <property type="match status" value="1"/>
</dbReference>
<dbReference type="SUPFAM" id="SSF50685">
    <property type="entry name" value="Barwin-like endoglucanases"/>
    <property type="match status" value="1"/>
</dbReference>
<dbReference type="SUPFAM" id="SSF49590">
    <property type="entry name" value="PHL pollen allergen"/>
    <property type="match status" value="1"/>
</dbReference>
<dbReference type="PROSITE" id="PS50843">
    <property type="entry name" value="EXPANSIN_CBD"/>
    <property type="match status" value="1"/>
</dbReference>
<dbReference type="PROSITE" id="PS50842">
    <property type="entry name" value="EXPANSIN_EG45"/>
    <property type="match status" value="1"/>
</dbReference>
<name>EXPA2_ARATH</name>
<keyword id="KW-0134">Cell wall</keyword>
<keyword id="KW-0961">Cell wall biogenesis/degradation</keyword>
<keyword id="KW-1015">Disulfide bond</keyword>
<keyword id="KW-0472">Membrane</keyword>
<keyword id="KW-1185">Reference proteome</keyword>
<keyword id="KW-0964">Secreted</keyword>
<keyword id="KW-0732">Signal</keyword>
<feature type="signal peptide" evidence="2">
    <location>
        <begin position="1"/>
        <end position="26"/>
    </location>
</feature>
<feature type="chain" id="PRO_0000008683" description="Expansin-A2">
    <location>
        <begin position="27"/>
        <end position="255"/>
    </location>
</feature>
<feature type="domain" description="Expansin-like EG45" evidence="4">
    <location>
        <begin position="50"/>
        <end position="162"/>
    </location>
</feature>
<feature type="domain" description="Expansin-like CBD" evidence="3">
    <location>
        <begin position="172"/>
        <end position="252"/>
    </location>
</feature>
<feature type="disulfide bond" evidence="4">
    <location>
        <begin position="53"/>
        <end position="81"/>
    </location>
</feature>
<feature type="disulfide bond" evidence="4">
    <location>
        <begin position="84"/>
        <end position="157"/>
    </location>
</feature>
<feature type="disulfide bond" evidence="4">
    <location>
        <begin position="89"/>
        <end position="96"/>
    </location>
</feature>
<feature type="sequence conflict" description="In Ref. 1; AAB38073." evidence="5" ref="1">
    <original>Q</original>
    <variation>T</variation>
    <location>
        <position position="88"/>
    </location>
</feature>
<proteinExistence type="evidence at transcript level"/>
<evidence type="ECO:0000250" key="1"/>
<evidence type="ECO:0000255" key="2"/>
<evidence type="ECO:0000255" key="3">
    <source>
        <dbReference type="PROSITE-ProRule" id="PRU00078"/>
    </source>
</evidence>
<evidence type="ECO:0000255" key="4">
    <source>
        <dbReference type="PROSITE-ProRule" id="PRU00079"/>
    </source>
</evidence>
<evidence type="ECO:0000305" key="5"/>
<reference key="1">
    <citation type="journal article" date="1995" name="Proc. Natl. Acad. Sci. U.S.A.">
        <title>Molecular cloning and sequence analysis of expansins - a highly conserved, multigene family of proteins that mediate cell wall extension in plants.</title>
        <authorList>
            <person name="Shcherban T.Y."/>
            <person name="Shi J."/>
            <person name="Durachko D.M."/>
            <person name="Guiltinan M.J."/>
            <person name="McQueen-Mason S.J."/>
            <person name="Shieh M."/>
            <person name="Cosgrove D.J."/>
        </authorList>
    </citation>
    <scope>NUCLEOTIDE SEQUENCE [MRNA]</scope>
</reference>
<reference key="2">
    <citation type="journal article" date="1998" name="DNA Res.">
        <title>Structural analysis of Arabidopsis thaliana chromosome 5. V. Sequence features of the regions of 1,381,565 bp covered by twenty one physically assigned P1 and TAC clones.</title>
        <authorList>
            <person name="Kaneko T."/>
            <person name="Kotani H."/>
            <person name="Nakamura Y."/>
            <person name="Sato S."/>
            <person name="Asamizu E."/>
            <person name="Miyajima N."/>
            <person name="Tabata S."/>
        </authorList>
    </citation>
    <scope>NUCLEOTIDE SEQUENCE [LARGE SCALE GENOMIC DNA]</scope>
    <source>
        <strain>cv. Columbia</strain>
    </source>
</reference>
<reference key="3">
    <citation type="journal article" date="2017" name="Plant J.">
        <title>Araport11: a complete reannotation of the Arabidopsis thaliana reference genome.</title>
        <authorList>
            <person name="Cheng C.Y."/>
            <person name="Krishnakumar V."/>
            <person name="Chan A.P."/>
            <person name="Thibaud-Nissen F."/>
            <person name="Schobel S."/>
            <person name="Town C.D."/>
        </authorList>
    </citation>
    <scope>GENOME REANNOTATION</scope>
    <source>
        <strain>cv. Columbia</strain>
    </source>
</reference>
<reference key="4">
    <citation type="journal article" date="2004" name="Plant Mol. Biol.">
        <title>Nomenclature for members of the expansin superfamily of genes and proteins.</title>
        <authorList>
            <person name="Kende H."/>
            <person name="Bradford K.J."/>
            <person name="Brummell D.A."/>
            <person name="Cho H.-T."/>
            <person name="Cosgrove D.J."/>
            <person name="Fleming A.J."/>
            <person name="Gehring C."/>
            <person name="Lee Y."/>
            <person name="McQueen-Mason S.J."/>
            <person name="Rose J.K.C."/>
            <person name="Voesenek L.A.C."/>
        </authorList>
    </citation>
    <scope>NOMENCLATURE</scope>
</reference>
<gene>
    <name type="primary">EXPA2</name>
    <name type="synonym">EXP2</name>
    <name type="ordered locus">At5g05290</name>
    <name type="ORF">K18I23.9</name>
</gene>
<organism>
    <name type="scientific">Arabidopsis thaliana</name>
    <name type="common">Mouse-ear cress</name>
    <dbReference type="NCBI Taxonomy" id="3702"/>
    <lineage>
        <taxon>Eukaryota</taxon>
        <taxon>Viridiplantae</taxon>
        <taxon>Streptophyta</taxon>
        <taxon>Embryophyta</taxon>
        <taxon>Tracheophyta</taxon>
        <taxon>Spermatophyta</taxon>
        <taxon>Magnoliopsida</taxon>
        <taxon>eudicotyledons</taxon>
        <taxon>Gunneridae</taxon>
        <taxon>Pentapetalae</taxon>
        <taxon>rosids</taxon>
        <taxon>malvids</taxon>
        <taxon>Brassicales</taxon>
        <taxon>Brassicaceae</taxon>
        <taxon>Camelineae</taxon>
        <taxon>Arabidopsis</taxon>
    </lineage>
</organism>
<protein>
    <recommendedName>
        <fullName>Expansin-A2</fullName>
        <shortName>AtEXPA2</shortName>
    </recommendedName>
    <alternativeName>
        <fullName>Alpha-expansin-2</fullName>
        <shortName>At-EXP2</shortName>
        <shortName>AtEx2</shortName>
    </alternativeName>
    <alternativeName>
        <fullName>Ath-ExpAlpha-1.12</fullName>
    </alternativeName>
</protein>